<sequence>MQQYCELVRRFYAEIGSGDLGYVPDALRCVLKALDEVAANDALPSSVREQAAYAAANLLVSDYVDE</sequence>
<reference key="1">
    <citation type="journal article" date="2004" name="Proc. Natl. Acad. Sci. U.S.A.">
        <title>Insights into the evolution of Yersinia pestis through whole-genome comparison with Yersinia pseudotuberculosis.</title>
        <authorList>
            <person name="Chain P.S.G."/>
            <person name="Carniel E."/>
            <person name="Larimer F.W."/>
            <person name="Lamerdin J."/>
            <person name="Stoutland P.O."/>
            <person name="Regala W.M."/>
            <person name="Georgescu A.M."/>
            <person name="Vergez L.M."/>
            <person name="Land M.L."/>
            <person name="Motin V.L."/>
            <person name="Brubaker R.R."/>
            <person name="Fowler J."/>
            <person name="Hinnebusch J."/>
            <person name="Marceau M."/>
            <person name="Medigue C."/>
            <person name="Simonet M."/>
            <person name="Chenal-Francisque V."/>
            <person name="Souza B."/>
            <person name="Dacheux D."/>
            <person name="Elliott J.M."/>
            <person name="Derbise A."/>
            <person name="Hauser L.J."/>
            <person name="Garcia E."/>
        </authorList>
    </citation>
    <scope>NUCLEOTIDE SEQUENCE [LARGE SCALE GENOMIC DNA]</scope>
    <source>
        <strain>IP32953</strain>
    </source>
</reference>
<comment type="similarity">
    <text evidence="1">Belongs to the UPF0253 family.</text>
</comment>
<accession>Q667L0</accession>
<gene>
    <name type="ordered locus">YPTB2982</name>
</gene>
<proteinExistence type="inferred from homology"/>
<evidence type="ECO:0000255" key="1">
    <source>
        <dbReference type="HAMAP-Rule" id="MF_01064"/>
    </source>
</evidence>
<organism>
    <name type="scientific">Yersinia pseudotuberculosis serotype I (strain IP32953)</name>
    <dbReference type="NCBI Taxonomy" id="273123"/>
    <lineage>
        <taxon>Bacteria</taxon>
        <taxon>Pseudomonadati</taxon>
        <taxon>Pseudomonadota</taxon>
        <taxon>Gammaproteobacteria</taxon>
        <taxon>Enterobacterales</taxon>
        <taxon>Yersiniaceae</taxon>
        <taxon>Yersinia</taxon>
    </lineage>
</organism>
<name>Y2982_YERPS</name>
<dbReference type="EMBL" id="BX936398">
    <property type="protein sequence ID" value="CAH22220.1"/>
    <property type="molecule type" value="Genomic_DNA"/>
</dbReference>
<dbReference type="RefSeq" id="WP_002212152.1">
    <property type="nucleotide sequence ID" value="NZ_CP009712.1"/>
</dbReference>
<dbReference type="SMR" id="Q667L0"/>
<dbReference type="KEGG" id="ypo:BZ17_3639"/>
<dbReference type="KEGG" id="yps:YPTB2982"/>
<dbReference type="PATRIC" id="fig|273123.14.peg.3820"/>
<dbReference type="Proteomes" id="UP000001011">
    <property type="component" value="Chromosome"/>
</dbReference>
<dbReference type="HAMAP" id="MF_01064">
    <property type="entry name" value="UPF0253"/>
    <property type="match status" value="1"/>
</dbReference>
<dbReference type="InterPro" id="IPR009624">
    <property type="entry name" value="UPF0253"/>
</dbReference>
<dbReference type="NCBIfam" id="NF003436">
    <property type="entry name" value="PRK04964.1"/>
    <property type="match status" value="1"/>
</dbReference>
<dbReference type="Pfam" id="PF06786">
    <property type="entry name" value="UPF0253"/>
    <property type="match status" value="1"/>
</dbReference>
<feature type="chain" id="PRO_0000277530" description="UPF0253 protein YPTB2982">
    <location>
        <begin position="1"/>
        <end position="66"/>
    </location>
</feature>
<protein>
    <recommendedName>
        <fullName evidence="1">UPF0253 protein YPTB2982</fullName>
    </recommendedName>
</protein>